<name>RS21_BACLD</name>
<organism>
    <name type="scientific">Bacillus licheniformis (strain ATCC 14580 / DSM 13 / JCM 2505 / CCUG 7422 / NBRC 12200 / NCIMB 9375 / NCTC 10341 / NRRL NRS-1264 / Gibson 46)</name>
    <dbReference type="NCBI Taxonomy" id="279010"/>
    <lineage>
        <taxon>Bacteria</taxon>
        <taxon>Bacillati</taxon>
        <taxon>Bacillota</taxon>
        <taxon>Bacilli</taxon>
        <taxon>Bacillales</taxon>
        <taxon>Bacillaceae</taxon>
        <taxon>Bacillus</taxon>
    </lineage>
</organism>
<protein>
    <recommendedName>
        <fullName evidence="1">Small ribosomal subunit protein bS21</fullName>
    </recommendedName>
    <alternativeName>
        <fullName evidence="3">30S ribosomal protein S21</fullName>
    </alternativeName>
</protein>
<dbReference type="EMBL" id="AE017333">
    <property type="protein sequence ID" value="AAU41603.1"/>
    <property type="molecule type" value="Genomic_DNA"/>
</dbReference>
<dbReference type="EMBL" id="CP000002">
    <property type="protein sequence ID" value="AAU24241.2"/>
    <property type="molecule type" value="Genomic_DNA"/>
</dbReference>
<dbReference type="RefSeq" id="WP_003183654.1">
    <property type="nucleotide sequence ID" value="NC_006322.1"/>
</dbReference>
<dbReference type="SMR" id="Q65H61"/>
<dbReference type="STRING" id="279010.BL05272"/>
<dbReference type="GeneID" id="92860677"/>
<dbReference type="KEGG" id="bld:BLi02732"/>
<dbReference type="KEGG" id="bli:BL05272"/>
<dbReference type="eggNOG" id="COG0828">
    <property type="taxonomic scope" value="Bacteria"/>
</dbReference>
<dbReference type="HOGENOM" id="CLU_159258_3_2_9"/>
<dbReference type="Proteomes" id="UP000000606">
    <property type="component" value="Chromosome"/>
</dbReference>
<dbReference type="GO" id="GO:1990904">
    <property type="term" value="C:ribonucleoprotein complex"/>
    <property type="evidence" value="ECO:0007669"/>
    <property type="project" value="UniProtKB-KW"/>
</dbReference>
<dbReference type="GO" id="GO:0005840">
    <property type="term" value="C:ribosome"/>
    <property type="evidence" value="ECO:0007669"/>
    <property type="project" value="UniProtKB-KW"/>
</dbReference>
<dbReference type="GO" id="GO:0003735">
    <property type="term" value="F:structural constituent of ribosome"/>
    <property type="evidence" value="ECO:0007669"/>
    <property type="project" value="InterPro"/>
</dbReference>
<dbReference type="GO" id="GO:0006412">
    <property type="term" value="P:translation"/>
    <property type="evidence" value="ECO:0007669"/>
    <property type="project" value="UniProtKB-UniRule"/>
</dbReference>
<dbReference type="Gene3D" id="1.20.5.1150">
    <property type="entry name" value="Ribosomal protein S8"/>
    <property type="match status" value="1"/>
</dbReference>
<dbReference type="HAMAP" id="MF_00358">
    <property type="entry name" value="Ribosomal_bS21"/>
    <property type="match status" value="1"/>
</dbReference>
<dbReference type="InterPro" id="IPR001911">
    <property type="entry name" value="Ribosomal_bS21"/>
</dbReference>
<dbReference type="InterPro" id="IPR018278">
    <property type="entry name" value="Ribosomal_bS21_CS"/>
</dbReference>
<dbReference type="InterPro" id="IPR038380">
    <property type="entry name" value="Ribosomal_bS21_sf"/>
</dbReference>
<dbReference type="NCBIfam" id="TIGR00030">
    <property type="entry name" value="S21p"/>
    <property type="match status" value="1"/>
</dbReference>
<dbReference type="PANTHER" id="PTHR21109">
    <property type="entry name" value="MITOCHONDRIAL 28S RIBOSOMAL PROTEIN S21"/>
    <property type="match status" value="1"/>
</dbReference>
<dbReference type="PANTHER" id="PTHR21109:SF22">
    <property type="entry name" value="SMALL RIBOSOMAL SUBUNIT PROTEIN BS21"/>
    <property type="match status" value="1"/>
</dbReference>
<dbReference type="Pfam" id="PF01165">
    <property type="entry name" value="Ribosomal_S21"/>
    <property type="match status" value="1"/>
</dbReference>
<dbReference type="PRINTS" id="PR00976">
    <property type="entry name" value="RIBOSOMALS21"/>
</dbReference>
<dbReference type="PROSITE" id="PS01181">
    <property type="entry name" value="RIBOSOMAL_S21"/>
    <property type="match status" value="1"/>
</dbReference>
<accession>Q65H61</accession>
<accession>Q62SL8</accession>
<feature type="chain" id="PRO_0000266626" description="Small ribosomal subunit protein bS21">
    <location>
        <begin position="1"/>
        <end position="57"/>
    </location>
</feature>
<feature type="region of interest" description="Disordered" evidence="2">
    <location>
        <begin position="35"/>
        <end position="57"/>
    </location>
</feature>
<feature type="compositionally biased region" description="Basic residues" evidence="2">
    <location>
        <begin position="43"/>
        <end position="57"/>
    </location>
</feature>
<gene>
    <name evidence="1" type="primary">rpsU</name>
    <name type="ordered locus">BLi02732</name>
    <name type="ordered locus">BL05272</name>
</gene>
<keyword id="KW-1185">Reference proteome</keyword>
<keyword id="KW-0687">Ribonucleoprotein</keyword>
<keyword id="KW-0689">Ribosomal protein</keyword>
<reference key="1">
    <citation type="journal article" date="2004" name="J. Mol. Microbiol. Biotechnol.">
        <title>The complete genome sequence of Bacillus licheniformis DSM13, an organism with great industrial potential.</title>
        <authorList>
            <person name="Veith B."/>
            <person name="Herzberg C."/>
            <person name="Steckel S."/>
            <person name="Feesche J."/>
            <person name="Maurer K.H."/>
            <person name="Ehrenreich P."/>
            <person name="Baeumer S."/>
            <person name="Henne A."/>
            <person name="Liesegang H."/>
            <person name="Merkl R."/>
            <person name="Ehrenreich A."/>
            <person name="Gottschalk G."/>
        </authorList>
    </citation>
    <scope>NUCLEOTIDE SEQUENCE [LARGE SCALE GENOMIC DNA]</scope>
    <source>
        <strain>ATCC 14580 / DSM 13 / JCM 2505 / CCUG 7422 / NBRC 12200 / NCIMB 9375 / NCTC 10341 / NRRL NRS-1264 / Gibson 46</strain>
    </source>
</reference>
<reference key="2">
    <citation type="journal article" date="2004" name="Genome Biol.">
        <title>Complete genome sequence of the industrial bacterium Bacillus licheniformis and comparisons with closely related Bacillus species.</title>
        <authorList>
            <person name="Rey M.W."/>
            <person name="Ramaiya P."/>
            <person name="Nelson B.A."/>
            <person name="Brody-Karpin S.D."/>
            <person name="Zaretsky E.J."/>
            <person name="Tang M."/>
            <person name="Lopez de Leon A."/>
            <person name="Xiang H."/>
            <person name="Gusti V."/>
            <person name="Clausen I.G."/>
            <person name="Olsen P.B."/>
            <person name="Rasmussen M.D."/>
            <person name="Andersen J.T."/>
            <person name="Joergensen P.L."/>
            <person name="Larsen T.S."/>
            <person name="Sorokin A."/>
            <person name="Bolotin A."/>
            <person name="Lapidus A."/>
            <person name="Galleron N."/>
            <person name="Ehrlich S.D."/>
            <person name="Berka R.M."/>
        </authorList>
    </citation>
    <scope>NUCLEOTIDE SEQUENCE [LARGE SCALE GENOMIC DNA]</scope>
    <source>
        <strain>ATCC 14580 / DSM 13 / JCM 2505 / CCUG 7422 / NBRC 12200 / NCIMB 9375 / NCTC 10341 / NRRL NRS-1264 / Gibson 46</strain>
    </source>
</reference>
<sequence length="57" mass="6874">MSKTVVRKNESLEDALRRFKRSVSKTGTLQEARKREFYEKPSVRRKKKSEAARKRKY</sequence>
<comment type="similarity">
    <text evidence="1">Belongs to the bacterial ribosomal protein bS21 family.</text>
</comment>
<proteinExistence type="inferred from homology"/>
<evidence type="ECO:0000255" key="1">
    <source>
        <dbReference type="HAMAP-Rule" id="MF_00358"/>
    </source>
</evidence>
<evidence type="ECO:0000256" key="2">
    <source>
        <dbReference type="SAM" id="MobiDB-lite"/>
    </source>
</evidence>
<evidence type="ECO:0000305" key="3"/>